<comment type="function">
    <text evidence="3">Part of the elfADCG fimbrial operon, which could be required for adherence to host epithelial cells. Could be involved in the export and assembly of the ElfA fimbrial subunits across the outer membrane.</text>
</comment>
<comment type="subcellular location">
    <subcellularLocation>
        <location evidence="1">Cell outer membrane</location>
        <topology evidence="1">Multi-pass membrane protein</topology>
    </subcellularLocation>
</comment>
<comment type="induction">
    <text evidence="3">Induced in the presence of epithelial cells.</text>
</comment>
<comment type="similarity">
    <text evidence="4">Belongs to the fimbrial export usher family.</text>
</comment>
<comment type="sequence caution" evidence="4">
    <conflict type="frameshift">
        <sequence resource="EMBL-CDS" id="AAG55425"/>
    </conflict>
    <text>This may be a natural frameshift.</text>
</comment>
<comment type="sequence caution" evidence="4">
    <conflict type="frameshift">
        <sequence resource="EMBL-CDS" id="AAG55426"/>
    </conflict>
    <text>This may be a natural frameshift.</text>
</comment>
<comment type="sequence caution" evidence="4">
    <conflict type="frameshift">
        <sequence resource="EMBL-CDS" id="BAB34446"/>
    </conflict>
    <text>This may be a natural frameshift.</text>
</comment>
<comment type="sequence caution" evidence="4">
    <conflict type="frameshift">
        <sequence resource="EMBL-CDS" id="BAB34447"/>
    </conflict>
    <text>This may be a natural frameshift.</text>
</comment>
<evidence type="ECO:0000250" key="1"/>
<evidence type="ECO:0000255" key="2"/>
<evidence type="ECO:0000269" key="3">
    <source>
    </source>
</evidence>
<evidence type="ECO:0000305" key="4"/>
<accession>Q8XDD1</accession>
<accession>Q7AG41</accession>
<accession>Q7AG42</accession>
<accession>Q8XDD2</accession>
<organism>
    <name type="scientific">Escherichia coli O157:H7</name>
    <dbReference type="NCBI Taxonomy" id="83334"/>
    <lineage>
        <taxon>Bacteria</taxon>
        <taxon>Pseudomonadati</taxon>
        <taxon>Pseudomonadota</taxon>
        <taxon>Gammaproteobacteria</taxon>
        <taxon>Enterobacterales</taxon>
        <taxon>Enterobacteriaceae</taxon>
        <taxon>Escherichia</taxon>
    </lineage>
</organism>
<dbReference type="EMBL" id="AE005174">
    <property type="protein sequence ID" value="AAG55425.1"/>
    <property type="status" value="ALT_FRAME"/>
    <property type="molecule type" value="Genomic_DNA"/>
</dbReference>
<dbReference type="EMBL" id="AE005174">
    <property type="protein sequence ID" value="AAG55426.1"/>
    <property type="status" value="ALT_FRAME"/>
    <property type="molecule type" value="Genomic_DNA"/>
</dbReference>
<dbReference type="EMBL" id="BA000007">
    <property type="protein sequence ID" value="BAB34446.1"/>
    <property type="status" value="ALT_FRAME"/>
    <property type="molecule type" value="Genomic_DNA"/>
</dbReference>
<dbReference type="EMBL" id="BA000007">
    <property type="protein sequence ID" value="BAB34447.1"/>
    <property type="status" value="ALT_FRAME"/>
    <property type="molecule type" value="Genomic_DNA"/>
</dbReference>
<dbReference type="PIR" id="E85620">
    <property type="entry name" value="E85620"/>
</dbReference>
<dbReference type="PIR" id="F85620">
    <property type="entry name" value="F85620"/>
</dbReference>
<dbReference type="PIR" id="G90756">
    <property type="entry name" value="G90756"/>
</dbReference>
<dbReference type="PIR" id="H90756">
    <property type="entry name" value="H90756"/>
</dbReference>
<dbReference type="SMR" id="Q8XDD1"/>
<dbReference type="STRING" id="155864.Z1289"/>
<dbReference type="KEGG" id="ece:Z1288"/>
<dbReference type="KEGG" id="ece:Z1289"/>
<dbReference type="eggNOG" id="COG3188">
    <property type="taxonomic scope" value="Bacteria"/>
</dbReference>
<dbReference type="HOGENOM" id="CLU_1364466_0_0_6"/>
<dbReference type="Proteomes" id="UP000000558">
    <property type="component" value="Chromosome"/>
</dbReference>
<dbReference type="Proteomes" id="UP000002519">
    <property type="component" value="Chromosome"/>
</dbReference>
<dbReference type="GO" id="GO:0009279">
    <property type="term" value="C:cell outer membrane"/>
    <property type="evidence" value="ECO:0007669"/>
    <property type="project" value="UniProtKB-SubCell"/>
</dbReference>
<dbReference type="GO" id="GO:0015473">
    <property type="term" value="F:fimbrial usher porin activity"/>
    <property type="evidence" value="ECO:0007669"/>
    <property type="project" value="InterPro"/>
</dbReference>
<dbReference type="GO" id="GO:0009297">
    <property type="term" value="P:pilus assembly"/>
    <property type="evidence" value="ECO:0007669"/>
    <property type="project" value="InterPro"/>
</dbReference>
<dbReference type="FunFam" id="2.60.40.2070:FF:000001">
    <property type="entry name" value="Fimbrial outer membrane usher protein"/>
    <property type="match status" value="1"/>
</dbReference>
<dbReference type="FunFam" id="2.60.40.2610:FF:000001">
    <property type="entry name" value="Outer membrane fimbrial usher protein"/>
    <property type="match status" value="1"/>
</dbReference>
<dbReference type="FunFam" id="3.10.20.410:FF:000002">
    <property type="entry name" value="Outer membrane usher protein FimD"/>
    <property type="match status" value="1"/>
</dbReference>
<dbReference type="FunFam" id="2.60.40.3110:FF:000001">
    <property type="entry name" value="Putative fimbrial outer membrane usher"/>
    <property type="match status" value="1"/>
</dbReference>
<dbReference type="Gene3D" id="2.60.40.2070">
    <property type="match status" value="1"/>
</dbReference>
<dbReference type="Gene3D" id="2.60.40.3110">
    <property type="match status" value="1"/>
</dbReference>
<dbReference type="Gene3D" id="3.10.20.410">
    <property type="match status" value="1"/>
</dbReference>
<dbReference type="Gene3D" id="2.60.40.2610">
    <property type="entry name" value="Outer membrane usher protein FimD, plug domain"/>
    <property type="match status" value="1"/>
</dbReference>
<dbReference type="InterPro" id="IPR000015">
    <property type="entry name" value="Fimb_usher"/>
</dbReference>
<dbReference type="InterPro" id="IPR018030">
    <property type="entry name" value="Fimbrial_membr_usher_CS"/>
</dbReference>
<dbReference type="InterPro" id="IPR042186">
    <property type="entry name" value="FimD_plug_dom"/>
</dbReference>
<dbReference type="InterPro" id="IPR025949">
    <property type="entry name" value="PapC-like_C"/>
</dbReference>
<dbReference type="InterPro" id="IPR043142">
    <property type="entry name" value="PapC-like_C_sf"/>
</dbReference>
<dbReference type="InterPro" id="IPR025885">
    <property type="entry name" value="PapC_N"/>
</dbReference>
<dbReference type="InterPro" id="IPR037224">
    <property type="entry name" value="PapC_N_sf"/>
</dbReference>
<dbReference type="NCBIfam" id="NF011740">
    <property type="entry name" value="PRK15193.1"/>
    <property type="match status" value="1"/>
</dbReference>
<dbReference type="PANTHER" id="PTHR30451:SF21">
    <property type="entry name" value="FIMBRIAL USHER DOMAIN-CONTAINING PROTEIN YDET-RELATED"/>
    <property type="match status" value="1"/>
</dbReference>
<dbReference type="PANTHER" id="PTHR30451">
    <property type="entry name" value="OUTER MEMBRANE USHER PROTEIN"/>
    <property type="match status" value="1"/>
</dbReference>
<dbReference type="Pfam" id="PF13953">
    <property type="entry name" value="PapC_C"/>
    <property type="match status" value="1"/>
</dbReference>
<dbReference type="Pfam" id="PF13954">
    <property type="entry name" value="PapC_N"/>
    <property type="match status" value="1"/>
</dbReference>
<dbReference type="Pfam" id="PF00577">
    <property type="entry name" value="Usher"/>
    <property type="match status" value="1"/>
</dbReference>
<dbReference type="SUPFAM" id="SSF141729">
    <property type="entry name" value="FimD N-terminal domain-like"/>
    <property type="match status" value="1"/>
</dbReference>
<dbReference type="PROSITE" id="PS01151">
    <property type="entry name" value="FIMBRIAL_USHER"/>
    <property type="match status" value="1"/>
</dbReference>
<keyword id="KW-0998">Cell outer membrane</keyword>
<keyword id="KW-1029">Fimbrium biogenesis</keyword>
<keyword id="KW-0472">Membrane</keyword>
<keyword id="KW-1185">Reference proteome</keyword>
<keyword id="KW-0732">Signal</keyword>
<keyword id="KW-0812">Transmembrane</keyword>
<keyword id="KW-1134">Transmembrane beta strand</keyword>
<keyword id="KW-0813">Transport</keyword>
<feature type="signal peptide" evidence="2">
    <location>
        <begin position="1"/>
        <end position="35"/>
    </location>
</feature>
<feature type="chain" id="PRO_0000413219" description="Probable outer membrane usher protein ElfC">
    <location>
        <begin position="36"/>
        <end position="866"/>
    </location>
</feature>
<proteinExistence type="evidence at transcript level"/>
<protein>
    <recommendedName>
        <fullName>Probable outer membrane usher protein ElfC</fullName>
    </recommendedName>
</protein>
<reference key="1">
    <citation type="journal article" date="2001" name="Nature">
        <title>Genome sequence of enterohaemorrhagic Escherichia coli O157:H7.</title>
        <authorList>
            <person name="Perna N.T."/>
            <person name="Plunkett G. III"/>
            <person name="Burland V."/>
            <person name="Mau B."/>
            <person name="Glasner J.D."/>
            <person name="Rose D.J."/>
            <person name="Mayhew G.F."/>
            <person name="Evans P.S."/>
            <person name="Gregor J."/>
            <person name="Kirkpatrick H.A."/>
            <person name="Posfai G."/>
            <person name="Hackett J."/>
            <person name="Klink S."/>
            <person name="Boutin A."/>
            <person name="Shao Y."/>
            <person name="Miller L."/>
            <person name="Grotbeck E.J."/>
            <person name="Davis N.W."/>
            <person name="Lim A."/>
            <person name="Dimalanta E.T."/>
            <person name="Potamousis K."/>
            <person name="Apodaca J."/>
            <person name="Anantharaman T.S."/>
            <person name="Lin J."/>
            <person name="Yen G."/>
            <person name="Schwartz D.C."/>
            <person name="Welch R.A."/>
            <person name="Blattner F.R."/>
        </authorList>
    </citation>
    <scope>NUCLEOTIDE SEQUENCE [LARGE SCALE GENOMIC DNA]</scope>
    <source>
        <strain>O157:H7 / EDL933 / ATCC 700927 / EHEC</strain>
    </source>
</reference>
<reference key="2">
    <citation type="journal article" date="2001" name="DNA Res.">
        <title>Complete genome sequence of enterohemorrhagic Escherichia coli O157:H7 and genomic comparison with a laboratory strain K-12.</title>
        <authorList>
            <person name="Hayashi T."/>
            <person name="Makino K."/>
            <person name="Ohnishi M."/>
            <person name="Kurokawa K."/>
            <person name="Ishii K."/>
            <person name="Yokoyama K."/>
            <person name="Han C.-G."/>
            <person name="Ohtsubo E."/>
            <person name="Nakayama K."/>
            <person name="Murata T."/>
            <person name="Tanaka M."/>
            <person name="Tobe T."/>
            <person name="Iida T."/>
            <person name="Takami H."/>
            <person name="Honda T."/>
            <person name="Sasakawa C."/>
            <person name="Ogasawara N."/>
            <person name="Yasunaga T."/>
            <person name="Kuhara S."/>
            <person name="Shiba T."/>
            <person name="Hattori M."/>
            <person name="Shinagawa H."/>
        </authorList>
    </citation>
    <scope>NUCLEOTIDE SEQUENCE [LARGE SCALE GENOMIC DNA]</scope>
    <source>
        <strain>O157:H7 / Sakai / RIMD 0509952 / EHEC</strain>
    </source>
</reference>
<reference key="3">
    <citation type="journal article" date="2009" name="Environ. Microbiol.">
        <title>The Escherichia coli ycbQRST operon encodes fimbriae with laminin-binding and epithelial cell adherence properties in Shiga-toxigenic E.coli O157:H7.</title>
        <authorList>
            <person name="Samadder P."/>
            <person name="Xicohtencatl-Cortes J."/>
            <person name="Saldana Z."/>
            <person name="Jordan D."/>
            <person name="Tarr P.I."/>
            <person name="Kaper J.B."/>
            <person name="Giron J.A."/>
        </authorList>
    </citation>
    <scope>FUNCTION</scope>
    <scope>INDUCTION</scope>
    <scope>GENE NAME</scope>
    <source>
        <strain>O157:H7 / EDL933 / ATCC 700927 / EHEC</strain>
    </source>
</reference>
<name>ELFC_ECO57</name>
<sequence>MYRTHRQHSLLSSGGVPSFIGGLVVFVSAAFNAQAETWFDPAFFKDDPSMVADLSRFEKGQKITPGVYRVDIVLNQTIVDTRNVNFVEITPEKGIAACLTTESLDAMGVNTDAFPAFKQLDKQACAPLAEIIPDASVTFNVNKLRLEISVPQIAIKSNARGYVPPERWDEGINALLLGYSFSGANSIHSSADSDSGDSYFLNLNSGVNLGPWRLRNNSTWSRSSGQTAEWKNLSSYLQRAVIPLKGELTVGDDYTAGDFFDSVSFRGVQLASDDNMLPDSLKGFAPVVRGIAKSNAQITIKQNGYTIYQTYVSPGAFEISDIYSTSSSGDLLVEIKEADGSVNSYSVPFSSVPLLQRQGRIKYAVTLAKYRTNSNEQQESKFAQATLQWGGPWGTTWYGGGQYAEYYRAAMFGLGFNLGDFGAISFDVTQAKSTLADQSEHKGQSYRFLYAKTLNQLGTNFQLMGYRYSTSGFYTLSDTMYKHMDGYEFNDGDDEDTPMWSRYYNLFYTKRGKLQVNISQQLSEYGSFYLSGSQQTYWHTDQQDRLLQFGYNTQIKDLSLGISWNYSKSRGQPDADQVFALNFSLPLNLLLSRSNDSYTSKKNYAWMTSNTSIDNEGHTTQNLGLTETLLDDGNLSYSVQQGYNSEGKTANGSASMDYKGVFADARVGYNYSDNGSQQQLNYALSGSLVAHSQGITLGQSLGETNVLIAAPGAENTRVANSTGLKTDWRGYTVVPYATSYRENRIALDAASLKRNVDLENAVVNVVPTKGALVLAEFNAHAGARVLMKTSKQGISLRFGAIATLDGVQTNSGIIDDDGSLYMAGLPAKGTITVRWGEAPDQICHISYELTEQQINSAITRMDAICR</sequence>
<gene>
    <name type="primary">elfC</name>
    <name type="synonym">ycbS</name>
    <name type="ordered locus">ECs1023/ECs1024</name>
    <name type="ordered locus">Z1288/Z1289</name>
</gene>